<keyword id="KW-0963">Cytoplasm</keyword>
<keyword id="KW-0456">Lyase</keyword>
<keyword id="KW-1185">Reference proteome</keyword>
<keyword id="KW-0704">Schiff base</keyword>
<reference key="1">
    <citation type="journal article" date="2004" name="Proc. Natl. Acad. Sci. U.S.A.">
        <title>Genome sequence of the enterobacterial phytopathogen Erwinia carotovora subsp. atroseptica and characterization of virulence factors.</title>
        <authorList>
            <person name="Bell K.S."/>
            <person name="Sebaihia M."/>
            <person name="Pritchard L."/>
            <person name="Holden M.T.G."/>
            <person name="Hyman L.J."/>
            <person name="Holeva M.C."/>
            <person name="Thomson N.R."/>
            <person name="Bentley S.D."/>
            <person name="Churcher L.J.C."/>
            <person name="Mungall K."/>
            <person name="Atkin R."/>
            <person name="Bason N."/>
            <person name="Brooks K."/>
            <person name="Chillingworth T."/>
            <person name="Clark K."/>
            <person name="Doggett J."/>
            <person name="Fraser A."/>
            <person name="Hance Z."/>
            <person name="Hauser H."/>
            <person name="Jagels K."/>
            <person name="Moule S."/>
            <person name="Norbertczak H."/>
            <person name="Ormond D."/>
            <person name="Price C."/>
            <person name="Quail M.A."/>
            <person name="Sanders M."/>
            <person name="Walker D."/>
            <person name="Whitehead S."/>
            <person name="Salmond G.P.C."/>
            <person name="Birch P.R.J."/>
            <person name="Parkhill J."/>
            <person name="Toth I.K."/>
        </authorList>
    </citation>
    <scope>NUCLEOTIDE SEQUENCE [LARGE SCALE GENOMIC DNA]</scope>
    <source>
        <strain>SCRI 1043 / ATCC BAA-672</strain>
    </source>
</reference>
<comment type="function">
    <text evidence="1">Catalyzes a reversible aldol reaction between acetaldehyde and D-glyceraldehyde 3-phosphate to generate 2-deoxy-D-ribose 5-phosphate.</text>
</comment>
<comment type="catalytic activity">
    <reaction evidence="1">
        <text>2-deoxy-D-ribose 5-phosphate = D-glyceraldehyde 3-phosphate + acetaldehyde</text>
        <dbReference type="Rhea" id="RHEA:12821"/>
        <dbReference type="ChEBI" id="CHEBI:15343"/>
        <dbReference type="ChEBI" id="CHEBI:59776"/>
        <dbReference type="ChEBI" id="CHEBI:62877"/>
        <dbReference type="EC" id="4.1.2.4"/>
    </reaction>
</comment>
<comment type="pathway">
    <text evidence="1">Carbohydrate degradation; 2-deoxy-D-ribose 1-phosphate degradation; D-glyceraldehyde 3-phosphate and acetaldehyde from 2-deoxy-alpha-D-ribose 1-phosphate: step 2/2.</text>
</comment>
<comment type="subcellular location">
    <subcellularLocation>
        <location evidence="1">Cytoplasm</location>
    </subcellularLocation>
</comment>
<comment type="similarity">
    <text evidence="1">Belongs to the DeoC/FbaB aldolase family. DeoC type 1 subfamily.</text>
</comment>
<dbReference type="EC" id="4.1.2.4" evidence="1"/>
<dbReference type="EMBL" id="BX950851">
    <property type="protein sequence ID" value="CAG75584.1"/>
    <property type="molecule type" value="Genomic_DNA"/>
</dbReference>
<dbReference type="RefSeq" id="WP_011094225.1">
    <property type="nucleotide sequence ID" value="NC_004547.2"/>
</dbReference>
<dbReference type="SMR" id="Q6D3R0"/>
<dbReference type="STRING" id="218491.ECA2684"/>
<dbReference type="KEGG" id="eca:ECA2684"/>
<dbReference type="PATRIC" id="fig|218491.5.peg.2719"/>
<dbReference type="eggNOG" id="COG0274">
    <property type="taxonomic scope" value="Bacteria"/>
</dbReference>
<dbReference type="HOGENOM" id="CLU_053595_0_1_6"/>
<dbReference type="OrthoDB" id="6579831at2"/>
<dbReference type="UniPathway" id="UPA00002">
    <property type="reaction ID" value="UER00468"/>
</dbReference>
<dbReference type="Proteomes" id="UP000007966">
    <property type="component" value="Chromosome"/>
</dbReference>
<dbReference type="GO" id="GO:0005737">
    <property type="term" value="C:cytoplasm"/>
    <property type="evidence" value="ECO:0007669"/>
    <property type="project" value="UniProtKB-SubCell"/>
</dbReference>
<dbReference type="GO" id="GO:0004139">
    <property type="term" value="F:deoxyribose-phosphate aldolase activity"/>
    <property type="evidence" value="ECO:0007669"/>
    <property type="project" value="UniProtKB-UniRule"/>
</dbReference>
<dbReference type="GO" id="GO:0006018">
    <property type="term" value="P:2-deoxyribose 1-phosphate catabolic process"/>
    <property type="evidence" value="ECO:0007669"/>
    <property type="project" value="UniProtKB-UniRule"/>
</dbReference>
<dbReference type="GO" id="GO:0016052">
    <property type="term" value="P:carbohydrate catabolic process"/>
    <property type="evidence" value="ECO:0007669"/>
    <property type="project" value="TreeGrafter"/>
</dbReference>
<dbReference type="GO" id="GO:0009264">
    <property type="term" value="P:deoxyribonucleotide catabolic process"/>
    <property type="evidence" value="ECO:0007669"/>
    <property type="project" value="InterPro"/>
</dbReference>
<dbReference type="CDD" id="cd00959">
    <property type="entry name" value="DeoC"/>
    <property type="match status" value="1"/>
</dbReference>
<dbReference type="FunFam" id="3.20.20.70:FF:000044">
    <property type="entry name" value="Deoxyribose-phosphate aldolase"/>
    <property type="match status" value="1"/>
</dbReference>
<dbReference type="Gene3D" id="3.20.20.70">
    <property type="entry name" value="Aldolase class I"/>
    <property type="match status" value="1"/>
</dbReference>
<dbReference type="HAMAP" id="MF_00114">
    <property type="entry name" value="DeoC_type1"/>
    <property type="match status" value="1"/>
</dbReference>
<dbReference type="InterPro" id="IPR013785">
    <property type="entry name" value="Aldolase_TIM"/>
</dbReference>
<dbReference type="InterPro" id="IPR011343">
    <property type="entry name" value="DeoC"/>
</dbReference>
<dbReference type="InterPro" id="IPR002915">
    <property type="entry name" value="DeoC/FbaB/LacD_aldolase"/>
</dbReference>
<dbReference type="InterPro" id="IPR028581">
    <property type="entry name" value="DeoC_typeI"/>
</dbReference>
<dbReference type="NCBIfam" id="TIGR00126">
    <property type="entry name" value="deoC"/>
    <property type="match status" value="1"/>
</dbReference>
<dbReference type="PANTHER" id="PTHR10889">
    <property type="entry name" value="DEOXYRIBOSE-PHOSPHATE ALDOLASE"/>
    <property type="match status" value="1"/>
</dbReference>
<dbReference type="PANTHER" id="PTHR10889:SF1">
    <property type="entry name" value="DEOXYRIBOSE-PHOSPHATE ALDOLASE"/>
    <property type="match status" value="1"/>
</dbReference>
<dbReference type="Pfam" id="PF01791">
    <property type="entry name" value="DeoC"/>
    <property type="match status" value="1"/>
</dbReference>
<dbReference type="PIRSF" id="PIRSF001357">
    <property type="entry name" value="DeoC"/>
    <property type="match status" value="1"/>
</dbReference>
<dbReference type="SMART" id="SM01133">
    <property type="entry name" value="DeoC"/>
    <property type="match status" value="1"/>
</dbReference>
<dbReference type="SUPFAM" id="SSF51569">
    <property type="entry name" value="Aldolase"/>
    <property type="match status" value="1"/>
</dbReference>
<feature type="chain" id="PRO_0000231540" description="Deoxyribose-phosphate aldolase">
    <location>
        <begin position="1"/>
        <end position="222"/>
    </location>
</feature>
<feature type="active site" description="Proton donor/acceptor" evidence="1">
    <location>
        <position position="90"/>
    </location>
</feature>
<feature type="active site" description="Schiff-base intermediate with acetaldehyde" evidence="1">
    <location>
        <position position="152"/>
    </location>
</feature>
<feature type="active site" description="Proton donor/acceptor" evidence="1">
    <location>
        <position position="181"/>
    </location>
</feature>
<gene>
    <name evidence="1" type="primary">deoC</name>
    <name type="ordered locus">ECA2684</name>
</gene>
<protein>
    <recommendedName>
        <fullName evidence="1">Deoxyribose-phosphate aldolase</fullName>
        <shortName evidence="1">DERA</shortName>
        <ecNumber evidence="1">4.1.2.4</ecNumber>
    </recommendedName>
    <alternativeName>
        <fullName evidence="1">2-deoxy-D-ribose 5-phosphate aldolase</fullName>
    </alternativeName>
    <alternativeName>
        <fullName evidence="1">Phosphodeoxyriboaldolase</fullName>
        <shortName evidence="1">Deoxyriboaldolase</shortName>
    </alternativeName>
</protein>
<sequence length="222" mass="23400">MTDYARYIDHTLLAANATEQQIVTLCDEAIAHHFYAVCVNSGYVPLVAEKLKGSAVQVCSVIGFPLGAGLTSSKAFEAKAAIDAGAQEIDMVINVGWLKSGKIDAVKADIQAVRGVCAAIPLKVILETCLLDDEQIVLVCEMCRQLDVAFVKTSTGFSTDGAREEHVRLMRSTVGSEMGVKASGAVRDRETAQRMIEAGATRIGTSSGVAIVSDDAAAAGNY</sequence>
<accession>Q6D3R0</accession>
<organism>
    <name type="scientific">Pectobacterium atrosepticum (strain SCRI 1043 / ATCC BAA-672)</name>
    <name type="common">Erwinia carotovora subsp. atroseptica</name>
    <dbReference type="NCBI Taxonomy" id="218491"/>
    <lineage>
        <taxon>Bacteria</taxon>
        <taxon>Pseudomonadati</taxon>
        <taxon>Pseudomonadota</taxon>
        <taxon>Gammaproteobacteria</taxon>
        <taxon>Enterobacterales</taxon>
        <taxon>Pectobacteriaceae</taxon>
        <taxon>Pectobacterium</taxon>
    </lineage>
</organism>
<evidence type="ECO:0000255" key="1">
    <source>
        <dbReference type="HAMAP-Rule" id="MF_00114"/>
    </source>
</evidence>
<name>DEOC_PECAS</name>
<proteinExistence type="inferred from homology"/>